<gene>
    <name evidence="1" type="primary">hisH</name>
    <name type="ordered locus">VV1_2916</name>
</gene>
<name>HIS5_VIBVU</name>
<comment type="function">
    <text evidence="1">IGPS catalyzes the conversion of PRFAR and glutamine to IGP, AICAR and glutamate. The HisH subunit catalyzes the hydrolysis of glutamine to glutamate and ammonia as part of the synthesis of IGP and AICAR. The resulting ammonia molecule is channeled to the active site of HisF.</text>
</comment>
<comment type="catalytic activity">
    <reaction evidence="1">
        <text>5-[(5-phospho-1-deoxy-D-ribulos-1-ylimino)methylamino]-1-(5-phospho-beta-D-ribosyl)imidazole-4-carboxamide + L-glutamine = D-erythro-1-(imidazol-4-yl)glycerol 3-phosphate + 5-amino-1-(5-phospho-beta-D-ribosyl)imidazole-4-carboxamide + L-glutamate + H(+)</text>
        <dbReference type="Rhea" id="RHEA:24793"/>
        <dbReference type="ChEBI" id="CHEBI:15378"/>
        <dbReference type="ChEBI" id="CHEBI:29985"/>
        <dbReference type="ChEBI" id="CHEBI:58278"/>
        <dbReference type="ChEBI" id="CHEBI:58359"/>
        <dbReference type="ChEBI" id="CHEBI:58475"/>
        <dbReference type="ChEBI" id="CHEBI:58525"/>
        <dbReference type="EC" id="4.3.2.10"/>
    </reaction>
</comment>
<comment type="catalytic activity">
    <reaction evidence="1">
        <text>L-glutamine + H2O = L-glutamate + NH4(+)</text>
        <dbReference type="Rhea" id="RHEA:15889"/>
        <dbReference type="ChEBI" id="CHEBI:15377"/>
        <dbReference type="ChEBI" id="CHEBI:28938"/>
        <dbReference type="ChEBI" id="CHEBI:29985"/>
        <dbReference type="ChEBI" id="CHEBI:58359"/>
        <dbReference type="EC" id="3.5.1.2"/>
    </reaction>
</comment>
<comment type="pathway">
    <text evidence="1">Amino-acid biosynthesis; L-histidine biosynthesis; L-histidine from 5-phospho-alpha-D-ribose 1-diphosphate: step 5/9.</text>
</comment>
<comment type="subunit">
    <text evidence="1">Heterodimer of HisH and HisF.</text>
</comment>
<comment type="subcellular location">
    <subcellularLocation>
        <location evidence="1">Cytoplasm</location>
    </subcellularLocation>
</comment>
<keyword id="KW-0028">Amino-acid biosynthesis</keyword>
<keyword id="KW-0963">Cytoplasm</keyword>
<keyword id="KW-0315">Glutamine amidotransferase</keyword>
<keyword id="KW-0368">Histidine biosynthesis</keyword>
<keyword id="KW-0378">Hydrolase</keyword>
<keyword id="KW-0456">Lyase</keyword>
<proteinExistence type="inferred from homology"/>
<protein>
    <recommendedName>
        <fullName evidence="1">Imidazole glycerol phosphate synthase subunit HisH</fullName>
        <ecNumber evidence="1">4.3.2.10</ecNumber>
    </recommendedName>
    <alternativeName>
        <fullName evidence="1">IGP synthase glutaminase subunit</fullName>
        <ecNumber evidence="1">3.5.1.2</ecNumber>
    </alternativeName>
    <alternativeName>
        <fullName evidence="1">IGP synthase subunit HisH</fullName>
    </alternativeName>
    <alternativeName>
        <fullName evidence="1">ImGP synthase subunit HisH</fullName>
        <shortName evidence="1">IGPS subunit HisH</shortName>
    </alternativeName>
</protein>
<feature type="chain" id="PRO_0000152443" description="Imidazole glycerol phosphate synthase subunit HisH">
    <location>
        <begin position="1"/>
        <end position="204"/>
    </location>
</feature>
<feature type="domain" description="Glutamine amidotransferase type-1" evidence="1">
    <location>
        <begin position="5"/>
        <end position="204"/>
    </location>
</feature>
<feature type="active site" description="Nucleophile" evidence="1">
    <location>
        <position position="80"/>
    </location>
</feature>
<feature type="active site" evidence="1">
    <location>
        <position position="186"/>
    </location>
</feature>
<feature type="active site" evidence="1">
    <location>
        <position position="188"/>
    </location>
</feature>
<accession>Q8D8Q3</accession>
<dbReference type="EC" id="4.3.2.10" evidence="1"/>
<dbReference type="EC" id="3.5.1.2" evidence="1"/>
<dbReference type="EMBL" id="AE016795">
    <property type="protein sequence ID" value="AAO11249.1"/>
    <property type="molecule type" value="Genomic_DNA"/>
</dbReference>
<dbReference type="RefSeq" id="WP_011080736.1">
    <property type="nucleotide sequence ID" value="NC_004459.3"/>
</dbReference>
<dbReference type="SMR" id="Q8D8Q3"/>
<dbReference type="KEGG" id="vvu:VV1_2916"/>
<dbReference type="HOGENOM" id="CLU_071837_0_0_6"/>
<dbReference type="UniPathway" id="UPA00031">
    <property type="reaction ID" value="UER00010"/>
</dbReference>
<dbReference type="Proteomes" id="UP000002275">
    <property type="component" value="Chromosome 1"/>
</dbReference>
<dbReference type="GO" id="GO:0005737">
    <property type="term" value="C:cytoplasm"/>
    <property type="evidence" value="ECO:0007669"/>
    <property type="project" value="UniProtKB-SubCell"/>
</dbReference>
<dbReference type="GO" id="GO:0004359">
    <property type="term" value="F:glutaminase activity"/>
    <property type="evidence" value="ECO:0007669"/>
    <property type="project" value="UniProtKB-EC"/>
</dbReference>
<dbReference type="GO" id="GO:0000107">
    <property type="term" value="F:imidazoleglycerol-phosphate synthase activity"/>
    <property type="evidence" value="ECO:0007669"/>
    <property type="project" value="UniProtKB-UniRule"/>
</dbReference>
<dbReference type="GO" id="GO:0016829">
    <property type="term" value="F:lyase activity"/>
    <property type="evidence" value="ECO:0007669"/>
    <property type="project" value="UniProtKB-KW"/>
</dbReference>
<dbReference type="GO" id="GO:0000105">
    <property type="term" value="P:L-histidine biosynthetic process"/>
    <property type="evidence" value="ECO:0007669"/>
    <property type="project" value="UniProtKB-UniRule"/>
</dbReference>
<dbReference type="CDD" id="cd01748">
    <property type="entry name" value="GATase1_IGP_Synthase"/>
    <property type="match status" value="1"/>
</dbReference>
<dbReference type="FunFam" id="3.40.50.880:FF:000009">
    <property type="entry name" value="Imidazole glycerol phosphate synthase subunit HisH"/>
    <property type="match status" value="1"/>
</dbReference>
<dbReference type="Gene3D" id="3.40.50.880">
    <property type="match status" value="1"/>
</dbReference>
<dbReference type="HAMAP" id="MF_00278">
    <property type="entry name" value="HisH"/>
    <property type="match status" value="1"/>
</dbReference>
<dbReference type="InterPro" id="IPR029062">
    <property type="entry name" value="Class_I_gatase-like"/>
</dbReference>
<dbReference type="InterPro" id="IPR017926">
    <property type="entry name" value="GATASE"/>
</dbReference>
<dbReference type="InterPro" id="IPR010139">
    <property type="entry name" value="Imidazole-glycPsynth_HisH"/>
</dbReference>
<dbReference type="NCBIfam" id="TIGR01855">
    <property type="entry name" value="IMP_synth_hisH"/>
    <property type="match status" value="1"/>
</dbReference>
<dbReference type="PANTHER" id="PTHR42701">
    <property type="entry name" value="IMIDAZOLE GLYCEROL PHOSPHATE SYNTHASE SUBUNIT HISH"/>
    <property type="match status" value="1"/>
</dbReference>
<dbReference type="PANTHER" id="PTHR42701:SF1">
    <property type="entry name" value="IMIDAZOLE GLYCEROL PHOSPHATE SYNTHASE SUBUNIT HISH"/>
    <property type="match status" value="1"/>
</dbReference>
<dbReference type="Pfam" id="PF00117">
    <property type="entry name" value="GATase"/>
    <property type="match status" value="1"/>
</dbReference>
<dbReference type="PIRSF" id="PIRSF000495">
    <property type="entry name" value="Amidotransf_hisH"/>
    <property type="match status" value="1"/>
</dbReference>
<dbReference type="SUPFAM" id="SSF52317">
    <property type="entry name" value="Class I glutamine amidotransferase-like"/>
    <property type="match status" value="1"/>
</dbReference>
<dbReference type="PROSITE" id="PS51273">
    <property type="entry name" value="GATASE_TYPE_1"/>
    <property type="match status" value="1"/>
</dbReference>
<reference key="1">
    <citation type="submission" date="2002-12" db="EMBL/GenBank/DDBJ databases">
        <title>Complete genome sequence of Vibrio vulnificus CMCP6.</title>
        <authorList>
            <person name="Rhee J.H."/>
            <person name="Kim S.Y."/>
            <person name="Chung S.S."/>
            <person name="Kim J.J."/>
            <person name="Moon Y.H."/>
            <person name="Jeong H."/>
            <person name="Choy H.E."/>
        </authorList>
    </citation>
    <scope>NUCLEOTIDE SEQUENCE [LARGE SCALE GENOMIC DNA]</scope>
    <source>
        <strain>CMCP6</strain>
    </source>
</reference>
<evidence type="ECO:0000255" key="1">
    <source>
        <dbReference type="HAMAP-Rule" id="MF_00278"/>
    </source>
</evidence>
<sequence length="204" mass="22216">MTEQKVVIIDTGCANVSSVKFAIERLGYDVTISKDPQVVLSADKLFLPGVGTASEAMKNLEERDLISLVKQVEKPLLGICLGMQLLGKVSQEKGQKADELVECLGLCDGEVKLLQTGDLPLPHMGWNTVSAKAGNPLFKGIEEGEYFYFVHSFAMPVGDYTIAECEYGNSFTAAVQSGNYYGVQFHPERSSKAGAKLIQNFLEL</sequence>
<organism>
    <name type="scientific">Vibrio vulnificus (strain CMCP6)</name>
    <dbReference type="NCBI Taxonomy" id="216895"/>
    <lineage>
        <taxon>Bacteria</taxon>
        <taxon>Pseudomonadati</taxon>
        <taxon>Pseudomonadota</taxon>
        <taxon>Gammaproteobacteria</taxon>
        <taxon>Vibrionales</taxon>
        <taxon>Vibrionaceae</taxon>
        <taxon>Vibrio</taxon>
    </lineage>
</organism>